<name>DEF2_PSESM</name>
<keyword id="KW-0378">Hydrolase</keyword>
<keyword id="KW-0408">Iron</keyword>
<keyword id="KW-0479">Metal-binding</keyword>
<keyword id="KW-0648">Protein biosynthesis</keyword>
<keyword id="KW-1185">Reference proteome</keyword>
<dbReference type="EC" id="3.5.1.88" evidence="1"/>
<dbReference type="EMBL" id="AE016853">
    <property type="protein sequence ID" value="AAO55118.1"/>
    <property type="molecule type" value="Genomic_DNA"/>
</dbReference>
<dbReference type="RefSeq" id="NP_791423.1">
    <property type="nucleotide sequence ID" value="NC_004578.1"/>
</dbReference>
<dbReference type="SMR" id="Q886I1"/>
<dbReference type="STRING" id="223283.PSPTO_1598"/>
<dbReference type="GeneID" id="1183235"/>
<dbReference type="KEGG" id="pst:PSPTO_1598"/>
<dbReference type="PATRIC" id="fig|223283.9.peg.1622"/>
<dbReference type="eggNOG" id="COG0242">
    <property type="taxonomic scope" value="Bacteria"/>
</dbReference>
<dbReference type="HOGENOM" id="CLU_061901_5_2_6"/>
<dbReference type="OrthoDB" id="9804313at2"/>
<dbReference type="PhylomeDB" id="Q886I1"/>
<dbReference type="Proteomes" id="UP000002515">
    <property type="component" value="Chromosome"/>
</dbReference>
<dbReference type="GO" id="GO:0046872">
    <property type="term" value="F:metal ion binding"/>
    <property type="evidence" value="ECO:0007669"/>
    <property type="project" value="UniProtKB-KW"/>
</dbReference>
<dbReference type="GO" id="GO:0042586">
    <property type="term" value="F:peptide deformylase activity"/>
    <property type="evidence" value="ECO:0007669"/>
    <property type="project" value="UniProtKB-UniRule"/>
</dbReference>
<dbReference type="GO" id="GO:0043686">
    <property type="term" value="P:co-translational protein modification"/>
    <property type="evidence" value="ECO:0007669"/>
    <property type="project" value="TreeGrafter"/>
</dbReference>
<dbReference type="GO" id="GO:0006412">
    <property type="term" value="P:translation"/>
    <property type="evidence" value="ECO:0007669"/>
    <property type="project" value="UniProtKB-UniRule"/>
</dbReference>
<dbReference type="CDD" id="cd00487">
    <property type="entry name" value="Pep_deformylase"/>
    <property type="match status" value="1"/>
</dbReference>
<dbReference type="FunFam" id="3.90.45.10:FF:000003">
    <property type="entry name" value="Peptide deformylase"/>
    <property type="match status" value="1"/>
</dbReference>
<dbReference type="Gene3D" id="3.90.45.10">
    <property type="entry name" value="Peptide deformylase"/>
    <property type="match status" value="1"/>
</dbReference>
<dbReference type="HAMAP" id="MF_00163">
    <property type="entry name" value="Pep_deformylase"/>
    <property type="match status" value="1"/>
</dbReference>
<dbReference type="InterPro" id="IPR023635">
    <property type="entry name" value="Peptide_deformylase"/>
</dbReference>
<dbReference type="InterPro" id="IPR036821">
    <property type="entry name" value="Peptide_deformylase_sf"/>
</dbReference>
<dbReference type="NCBIfam" id="TIGR00079">
    <property type="entry name" value="pept_deformyl"/>
    <property type="match status" value="1"/>
</dbReference>
<dbReference type="NCBIfam" id="NF001159">
    <property type="entry name" value="PRK00150.1-3"/>
    <property type="match status" value="1"/>
</dbReference>
<dbReference type="PANTHER" id="PTHR10458">
    <property type="entry name" value="PEPTIDE DEFORMYLASE"/>
    <property type="match status" value="1"/>
</dbReference>
<dbReference type="PANTHER" id="PTHR10458:SF20">
    <property type="entry name" value="PEPTIDE DEFORMYLASE 1"/>
    <property type="match status" value="1"/>
</dbReference>
<dbReference type="Pfam" id="PF01327">
    <property type="entry name" value="Pep_deformylase"/>
    <property type="match status" value="1"/>
</dbReference>
<dbReference type="PIRSF" id="PIRSF004749">
    <property type="entry name" value="Pep_def"/>
    <property type="match status" value="1"/>
</dbReference>
<dbReference type="PRINTS" id="PR01576">
    <property type="entry name" value="PDEFORMYLASE"/>
</dbReference>
<dbReference type="SUPFAM" id="SSF56420">
    <property type="entry name" value="Peptide deformylase"/>
    <property type="match status" value="1"/>
</dbReference>
<proteinExistence type="inferred from homology"/>
<organism>
    <name type="scientific">Pseudomonas syringae pv. tomato (strain ATCC BAA-871 / DC3000)</name>
    <dbReference type="NCBI Taxonomy" id="223283"/>
    <lineage>
        <taxon>Bacteria</taxon>
        <taxon>Pseudomonadati</taxon>
        <taxon>Pseudomonadota</taxon>
        <taxon>Gammaproteobacteria</taxon>
        <taxon>Pseudomonadales</taxon>
        <taxon>Pseudomonadaceae</taxon>
        <taxon>Pseudomonas</taxon>
    </lineage>
</organism>
<accession>Q886I1</accession>
<feature type="chain" id="PRO_0000082823" description="Peptide deformylase 2">
    <location>
        <begin position="1"/>
        <end position="179"/>
    </location>
</feature>
<feature type="active site" evidence="1">
    <location>
        <position position="144"/>
    </location>
</feature>
<feature type="binding site" evidence="1">
    <location>
        <position position="101"/>
    </location>
    <ligand>
        <name>Fe cation</name>
        <dbReference type="ChEBI" id="CHEBI:24875"/>
    </ligand>
</feature>
<feature type="binding site" evidence="1">
    <location>
        <position position="143"/>
    </location>
    <ligand>
        <name>Fe cation</name>
        <dbReference type="ChEBI" id="CHEBI:24875"/>
    </ligand>
</feature>
<feature type="binding site" evidence="1">
    <location>
        <position position="147"/>
    </location>
    <ligand>
        <name>Fe cation</name>
        <dbReference type="ChEBI" id="CHEBI:24875"/>
    </ligand>
</feature>
<evidence type="ECO:0000255" key="1">
    <source>
        <dbReference type="HAMAP-Rule" id="MF_00163"/>
    </source>
</evidence>
<comment type="function">
    <text evidence="1">Removes the formyl group from the N-terminal Met of newly synthesized proteins. Requires at least a dipeptide for an efficient rate of reaction. N-terminal L-methionine is a prerequisite for activity but the enzyme has broad specificity at other positions.</text>
</comment>
<comment type="catalytic activity">
    <reaction evidence="1">
        <text>N-terminal N-formyl-L-methionyl-[peptide] + H2O = N-terminal L-methionyl-[peptide] + formate</text>
        <dbReference type="Rhea" id="RHEA:24420"/>
        <dbReference type="Rhea" id="RHEA-COMP:10639"/>
        <dbReference type="Rhea" id="RHEA-COMP:10640"/>
        <dbReference type="ChEBI" id="CHEBI:15377"/>
        <dbReference type="ChEBI" id="CHEBI:15740"/>
        <dbReference type="ChEBI" id="CHEBI:49298"/>
        <dbReference type="ChEBI" id="CHEBI:64731"/>
        <dbReference type="EC" id="3.5.1.88"/>
    </reaction>
</comment>
<comment type="cofactor">
    <cofactor evidence="1">
        <name>Fe(2+)</name>
        <dbReference type="ChEBI" id="CHEBI:29033"/>
    </cofactor>
    <text evidence="1">Binds 1 Fe(2+) ion.</text>
</comment>
<comment type="similarity">
    <text evidence="1">Belongs to the polypeptide deformylase family.</text>
</comment>
<protein>
    <recommendedName>
        <fullName evidence="1">Peptide deformylase 2</fullName>
        <shortName evidence="1">PDF 2</shortName>
        <ecNumber evidence="1">3.5.1.88</ecNumber>
    </recommendedName>
    <alternativeName>
        <fullName evidence="1">Polypeptide deformylase 2</fullName>
    </alternativeName>
</protein>
<gene>
    <name evidence="1" type="primary">def2</name>
    <name type="ordered locus">PSPTO_1598</name>
</gene>
<sequence length="179" mass="20051">MIRNILKMGDERLLRIAPPVPAEMFGSSELETLIADMFETMHSVGGVGLAAPQIGIDLQLVIFGFERSERYPQAEAVPQTILLNPLITPLHPGVEEGWEGCLSVPGLRGMVDRYQSIRYEGFDPDGQPIERIAHGFHARVVQHECDHLIGRLYPSRITDFSKFGFMDVMFPDMDPNADE</sequence>
<reference key="1">
    <citation type="journal article" date="2003" name="Proc. Natl. Acad. Sci. U.S.A.">
        <title>The complete genome sequence of the Arabidopsis and tomato pathogen Pseudomonas syringae pv. tomato DC3000.</title>
        <authorList>
            <person name="Buell C.R."/>
            <person name="Joardar V."/>
            <person name="Lindeberg M."/>
            <person name="Selengut J."/>
            <person name="Paulsen I.T."/>
            <person name="Gwinn M.L."/>
            <person name="Dodson R.J."/>
            <person name="DeBoy R.T."/>
            <person name="Durkin A.S."/>
            <person name="Kolonay J.F."/>
            <person name="Madupu R."/>
            <person name="Daugherty S.C."/>
            <person name="Brinkac L.M."/>
            <person name="Beanan M.J."/>
            <person name="Haft D.H."/>
            <person name="Nelson W.C."/>
            <person name="Davidsen T.M."/>
            <person name="Zafar N."/>
            <person name="Zhou L."/>
            <person name="Liu J."/>
            <person name="Yuan Q."/>
            <person name="Khouri H.M."/>
            <person name="Fedorova N.B."/>
            <person name="Tran B."/>
            <person name="Russell D."/>
            <person name="Berry K.J."/>
            <person name="Utterback T.R."/>
            <person name="Van Aken S.E."/>
            <person name="Feldblyum T.V."/>
            <person name="D'Ascenzo M."/>
            <person name="Deng W.-L."/>
            <person name="Ramos A.R."/>
            <person name="Alfano J.R."/>
            <person name="Cartinhour S."/>
            <person name="Chatterjee A.K."/>
            <person name="Delaney T.P."/>
            <person name="Lazarowitz S.G."/>
            <person name="Martin G.B."/>
            <person name="Schneider D.J."/>
            <person name="Tang X."/>
            <person name="Bender C.L."/>
            <person name="White O."/>
            <person name="Fraser C.M."/>
            <person name="Collmer A."/>
        </authorList>
    </citation>
    <scope>NUCLEOTIDE SEQUENCE [LARGE SCALE GENOMIC DNA]</scope>
    <source>
        <strain>ATCC BAA-871 / DC3000</strain>
    </source>
</reference>